<reference key="1">
    <citation type="journal article" date="2006" name="Theor. Appl. Genet.">
        <title>Complete chloroplast genome sequences of Solanum bulbocastanum, Solanum lycopersicum and comparative analyses with other Solanaceae genomes.</title>
        <authorList>
            <person name="Daniell H."/>
            <person name="Lee S.-B."/>
            <person name="Grevich J."/>
            <person name="Saski C."/>
            <person name="Quesada-Vargas T."/>
            <person name="Guda C."/>
            <person name="Tomkins J."/>
            <person name="Jansen R.K."/>
        </authorList>
    </citation>
    <scope>NUCLEOTIDE SEQUENCE [LARGE SCALE GENOMIC DNA]</scope>
    <source>
        <strain>cv. PT29</strain>
    </source>
</reference>
<dbReference type="EMBL" id="DQ347958">
    <property type="protein sequence ID" value="ABC56245.1"/>
    <property type="molecule type" value="Genomic_DNA"/>
</dbReference>
<dbReference type="RefSeq" id="YP_538882.1">
    <property type="nucleotide sequence ID" value="NC_007943.1"/>
</dbReference>
<dbReference type="SMR" id="Q2MIF5"/>
<dbReference type="GeneID" id="3989525"/>
<dbReference type="GO" id="GO:0009507">
    <property type="term" value="C:chloroplast"/>
    <property type="evidence" value="ECO:0007669"/>
    <property type="project" value="UniProtKB-SubCell"/>
</dbReference>
<dbReference type="GO" id="GO:1990904">
    <property type="term" value="C:ribonucleoprotein complex"/>
    <property type="evidence" value="ECO:0007669"/>
    <property type="project" value="UniProtKB-KW"/>
</dbReference>
<dbReference type="GO" id="GO:0005840">
    <property type="term" value="C:ribosome"/>
    <property type="evidence" value="ECO:0007669"/>
    <property type="project" value="UniProtKB-KW"/>
</dbReference>
<dbReference type="GO" id="GO:0019843">
    <property type="term" value="F:rRNA binding"/>
    <property type="evidence" value="ECO:0007669"/>
    <property type="project" value="UniProtKB-UniRule"/>
</dbReference>
<dbReference type="GO" id="GO:0003735">
    <property type="term" value="F:structural constituent of ribosome"/>
    <property type="evidence" value="ECO:0007669"/>
    <property type="project" value="InterPro"/>
</dbReference>
<dbReference type="GO" id="GO:0006412">
    <property type="term" value="P:translation"/>
    <property type="evidence" value="ECO:0007669"/>
    <property type="project" value="UniProtKB-UniRule"/>
</dbReference>
<dbReference type="FunFam" id="3.30.420.80:FF:000003">
    <property type="entry name" value="30S ribosomal protein S11, chloroplastic"/>
    <property type="match status" value="1"/>
</dbReference>
<dbReference type="Gene3D" id="3.30.420.80">
    <property type="entry name" value="Ribosomal protein S11"/>
    <property type="match status" value="1"/>
</dbReference>
<dbReference type="HAMAP" id="MF_01310">
    <property type="entry name" value="Ribosomal_uS11"/>
    <property type="match status" value="1"/>
</dbReference>
<dbReference type="InterPro" id="IPR001971">
    <property type="entry name" value="Ribosomal_uS11"/>
</dbReference>
<dbReference type="InterPro" id="IPR019981">
    <property type="entry name" value="Ribosomal_uS11_bac-type"/>
</dbReference>
<dbReference type="InterPro" id="IPR018102">
    <property type="entry name" value="Ribosomal_uS11_CS"/>
</dbReference>
<dbReference type="InterPro" id="IPR036967">
    <property type="entry name" value="Ribosomal_uS11_sf"/>
</dbReference>
<dbReference type="NCBIfam" id="NF003698">
    <property type="entry name" value="PRK05309.1"/>
    <property type="match status" value="1"/>
</dbReference>
<dbReference type="NCBIfam" id="TIGR03632">
    <property type="entry name" value="uS11_bact"/>
    <property type="match status" value="1"/>
</dbReference>
<dbReference type="PANTHER" id="PTHR11759">
    <property type="entry name" value="40S RIBOSOMAL PROTEIN S14/30S RIBOSOMAL PROTEIN S11"/>
    <property type="match status" value="1"/>
</dbReference>
<dbReference type="Pfam" id="PF00411">
    <property type="entry name" value="Ribosomal_S11"/>
    <property type="match status" value="1"/>
</dbReference>
<dbReference type="PIRSF" id="PIRSF002131">
    <property type="entry name" value="Ribosomal_S11"/>
    <property type="match status" value="1"/>
</dbReference>
<dbReference type="SUPFAM" id="SSF53137">
    <property type="entry name" value="Translational machinery components"/>
    <property type="match status" value="1"/>
</dbReference>
<dbReference type="PROSITE" id="PS00054">
    <property type="entry name" value="RIBOSOMAL_S11"/>
    <property type="match status" value="1"/>
</dbReference>
<comment type="subunit">
    <text evidence="1">Part of the 30S ribosomal subunit.</text>
</comment>
<comment type="subcellular location">
    <subcellularLocation>
        <location>Plastid</location>
        <location>Chloroplast</location>
    </subcellularLocation>
</comment>
<comment type="similarity">
    <text evidence="1">Belongs to the universal ribosomal protein uS11 family.</text>
</comment>
<organism>
    <name type="scientific">Solanum bulbocastanum</name>
    <name type="common">Wild potato</name>
    <dbReference type="NCBI Taxonomy" id="147425"/>
    <lineage>
        <taxon>Eukaryota</taxon>
        <taxon>Viridiplantae</taxon>
        <taxon>Streptophyta</taxon>
        <taxon>Embryophyta</taxon>
        <taxon>Tracheophyta</taxon>
        <taxon>Spermatophyta</taxon>
        <taxon>Magnoliopsida</taxon>
        <taxon>eudicotyledons</taxon>
        <taxon>Gunneridae</taxon>
        <taxon>Pentapetalae</taxon>
        <taxon>asterids</taxon>
        <taxon>lamiids</taxon>
        <taxon>Solanales</taxon>
        <taxon>Solanaceae</taxon>
        <taxon>Solanoideae</taxon>
        <taxon>Solaneae</taxon>
        <taxon>Solanum</taxon>
    </lineage>
</organism>
<accession>Q2MIF5</accession>
<feature type="chain" id="PRO_0000230457" description="Small ribosomal subunit protein uS11c">
    <location>
        <begin position="1"/>
        <end position="138"/>
    </location>
</feature>
<feature type="region of interest" description="Disordered" evidence="2">
    <location>
        <begin position="1"/>
        <end position="22"/>
    </location>
</feature>
<feature type="compositionally biased region" description="Basic residues" evidence="2">
    <location>
        <begin position="9"/>
        <end position="22"/>
    </location>
</feature>
<sequence length="138" mass="14913">MAKAIPKISSRRNGRISSRKGARRIPKGVIHVQASFNNTIVTVTDVRGRVVSWSSAGTSGFKGTRRGTPFAAQTAAANAIRTVVDQGMQRAEVMIKGPGLGRDAALRAIRRSGILLTFVRDVTPMPHNGCRPPKKRRV</sequence>
<protein>
    <recommendedName>
        <fullName evidence="1">Small ribosomal subunit protein uS11c</fullName>
    </recommendedName>
    <alternativeName>
        <fullName evidence="3">30S ribosomal protein S11, chloroplastic</fullName>
    </alternativeName>
</protein>
<name>RR11_SOLBU</name>
<gene>
    <name evidence="1" type="primary">rps11</name>
</gene>
<evidence type="ECO:0000255" key="1">
    <source>
        <dbReference type="HAMAP-Rule" id="MF_01310"/>
    </source>
</evidence>
<evidence type="ECO:0000256" key="2">
    <source>
        <dbReference type="SAM" id="MobiDB-lite"/>
    </source>
</evidence>
<evidence type="ECO:0000305" key="3"/>
<keyword id="KW-0150">Chloroplast</keyword>
<keyword id="KW-0934">Plastid</keyword>
<keyword id="KW-0687">Ribonucleoprotein</keyword>
<keyword id="KW-0689">Ribosomal protein</keyword>
<keyword id="KW-0694">RNA-binding</keyword>
<keyword id="KW-0699">rRNA-binding</keyword>
<proteinExistence type="inferred from homology"/>
<geneLocation type="chloroplast"/>